<protein>
    <recommendedName>
        <fullName evidence="8">bZIP transcription factor 49</fullName>
        <shortName evidence="8">AtbZIP49</shortName>
    </recommendedName>
</protein>
<comment type="function">
    <text evidence="1">Transcriptional activator involved in stress responses.</text>
</comment>
<comment type="subunit">
    <text evidence="7">Interacts with BZIP28.</text>
</comment>
<comment type="subcellular location">
    <subcellularLocation>
        <location evidence="1">Endoplasmic reticulum membrane</location>
        <topology evidence="3">Single-pass membrane protein</topology>
    </subcellularLocation>
    <subcellularLocation>
        <location evidence="1">Nucleus</location>
    </subcellularLocation>
    <text evidence="1">Translocates to the nucleus following stress response.</text>
</comment>
<comment type="similarity">
    <text evidence="9">Belongs to the bZIP family.</text>
</comment>
<proteinExistence type="evidence at protein level"/>
<gene>
    <name evidence="8" type="primary">BZIP49</name>
    <name evidence="11" type="ordered locus">At3g56660</name>
    <name evidence="12" type="ORF">T5P19.310</name>
</gene>
<evidence type="ECO:0000250" key="1">
    <source>
        <dbReference type="UniProtKB" id="O22208"/>
    </source>
</evidence>
<evidence type="ECO:0000250" key="2">
    <source>
        <dbReference type="UniProtKB" id="Q9SG86"/>
    </source>
</evidence>
<evidence type="ECO:0000255" key="3"/>
<evidence type="ECO:0000255" key="4">
    <source>
        <dbReference type="PROSITE-ProRule" id="PRU00498"/>
    </source>
</evidence>
<evidence type="ECO:0000255" key="5">
    <source>
        <dbReference type="PROSITE-ProRule" id="PRU00978"/>
    </source>
</evidence>
<evidence type="ECO:0000256" key="6">
    <source>
        <dbReference type="SAM" id="MobiDB-lite"/>
    </source>
</evidence>
<evidence type="ECO:0000269" key="7">
    <source>
    </source>
</evidence>
<evidence type="ECO:0000303" key="8">
    <source>
    </source>
</evidence>
<evidence type="ECO:0000305" key="9"/>
<evidence type="ECO:0000305" key="10">
    <source>
    </source>
</evidence>
<evidence type="ECO:0000312" key="11">
    <source>
        <dbReference type="Araport" id="AT3G56660"/>
    </source>
</evidence>
<evidence type="ECO:0000312" key="12">
    <source>
        <dbReference type="EMBL" id="CAB88069.1"/>
    </source>
</evidence>
<sequence>MAEPVLEDTYLTFSSDFDYIAIAPSPFDNFCNSNSDQVRNSISDLRFLIDDDDSFDDLYFPSENESFCIPPDATKREMSGDFTPASGISGDCVNEDTEKNTNGVLISTSSCYNRESPTDSDFSGTSQSLSFSGQDSAKRKTEIEEDSSDESRRLGKDGFASVIKVGGEEDDEKKKNVRLVRNRESAHLSRQRKKHYVEELEDKVKNMHSTISELSSKMSYFVAENVTLRQQMGTRFSSGPPMVPIVYPWMQYPAYMVKPQGSQVALLPIPRLKPKHSVAKVKKFKKVASFSVFGFLFCMFLFGALVNISYGEYKSNYVTDGVYDQSRGRVLVVDSSRVHCGGDSDQGVGRNVSETENLGPPRNSSEPLVASLFVPRNEKLVKIDGNLIIHSVLASEKARDSETKNEEGKSVLATTTKTLSPALPLPDSTSPRTRDVSKHLYSETGKGLSSSGSDDASNDQLKSTIANGKMQQWFREGVAGPMFSSGMCTEVFQFDVSSNSGAIIPASPHTQQCKNTSDTQKGKKNRRILSGGLPVSDFNLTKEDHNSSSKDKFRETKPGPSMVVSVLVDPREGGNGDIDGMMGGTKPQSRVFIVVLVDGVKYITYSCVLPRPDVPHLMTS</sequence>
<reference key="1">
    <citation type="journal article" date="2000" name="Nature">
        <title>Sequence and analysis of chromosome 3 of the plant Arabidopsis thaliana.</title>
        <authorList>
            <person name="Salanoubat M."/>
            <person name="Lemcke K."/>
            <person name="Rieger M."/>
            <person name="Ansorge W."/>
            <person name="Unseld M."/>
            <person name="Fartmann B."/>
            <person name="Valle G."/>
            <person name="Bloecker H."/>
            <person name="Perez-Alonso M."/>
            <person name="Obermaier B."/>
            <person name="Delseny M."/>
            <person name="Boutry M."/>
            <person name="Grivell L.A."/>
            <person name="Mache R."/>
            <person name="Puigdomenech P."/>
            <person name="De Simone V."/>
            <person name="Choisne N."/>
            <person name="Artiguenave F."/>
            <person name="Robert C."/>
            <person name="Brottier P."/>
            <person name="Wincker P."/>
            <person name="Cattolico L."/>
            <person name="Weissenbach J."/>
            <person name="Saurin W."/>
            <person name="Quetier F."/>
            <person name="Schaefer M."/>
            <person name="Mueller-Auer S."/>
            <person name="Gabel C."/>
            <person name="Fuchs M."/>
            <person name="Benes V."/>
            <person name="Wurmbach E."/>
            <person name="Drzonek H."/>
            <person name="Erfle H."/>
            <person name="Jordan N."/>
            <person name="Bangert S."/>
            <person name="Wiedelmann R."/>
            <person name="Kranz H."/>
            <person name="Voss H."/>
            <person name="Holland R."/>
            <person name="Brandt P."/>
            <person name="Nyakatura G."/>
            <person name="Vezzi A."/>
            <person name="D'Angelo M."/>
            <person name="Pallavicini A."/>
            <person name="Toppo S."/>
            <person name="Simionati B."/>
            <person name="Conrad A."/>
            <person name="Hornischer K."/>
            <person name="Kauer G."/>
            <person name="Loehnert T.-H."/>
            <person name="Nordsiek G."/>
            <person name="Reichelt J."/>
            <person name="Scharfe M."/>
            <person name="Schoen O."/>
            <person name="Bargues M."/>
            <person name="Terol J."/>
            <person name="Climent J."/>
            <person name="Navarro P."/>
            <person name="Collado C."/>
            <person name="Perez-Perez A."/>
            <person name="Ottenwaelder B."/>
            <person name="Duchemin D."/>
            <person name="Cooke R."/>
            <person name="Laudie M."/>
            <person name="Berger-Llauro C."/>
            <person name="Purnelle B."/>
            <person name="Masuy D."/>
            <person name="de Haan M."/>
            <person name="Maarse A.C."/>
            <person name="Alcaraz J.-P."/>
            <person name="Cottet A."/>
            <person name="Casacuberta E."/>
            <person name="Monfort A."/>
            <person name="Argiriou A."/>
            <person name="Flores M."/>
            <person name="Liguori R."/>
            <person name="Vitale D."/>
            <person name="Mannhaupt G."/>
            <person name="Haase D."/>
            <person name="Schoof H."/>
            <person name="Rudd S."/>
            <person name="Zaccaria P."/>
            <person name="Mewes H.-W."/>
            <person name="Mayer K.F.X."/>
            <person name="Kaul S."/>
            <person name="Town C.D."/>
            <person name="Koo H.L."/>
            <person name="Tallon L.J."/>
            <person name="Jenkins J."/>
            <person name="Rooney T."/>
            <person name="Rizzo M."/>
            <person name="Walts A."/>
            <person name="Utterback T."/>
            <person name="Fujii C.Y."/>
            <person name="Shea T.P."/>
            <person name="Creasy T.H."/>
            <person name="Haas B."/>
            <person name="Maiti R."/>
            <person name="Wu D."/>
            <person name="Peterson J."/>
            <person name="Van Aken S."/>
            <person name="Pai G."/>
            <person name="Militscher J."/>
            <person name="Sellers P."/>
            <person name="Gill J.E."/>
            <person name="Feldblyum T.V."/>
            <person name="Preuss D."/>
            <person name="Lin X."/>
            <person name="Nierman W.C."/>
            <person name="Salzberg S.L."/>
            <person name="White O."/>
            <person name="Venter J.C."/>
            <person name="Fraser C.M."/>
            <person name="Kaneko T."/>
            <person name="Nakamura Y."/>
            <person name="Sato S."/>
            <person name="Kato T."/>
            <person name="Asamizu E."/>
            <person name="Sasamoto S."/>
            <person name="Kimura T."/>
            <person name="Idesawa K."/>
            <person name="Kawashima K."/>
            <person name="Kishida Y."/>
            <person name="Kiyokawa C."/>
            <person name="Kohara M."/>
            <person name="Matsumoto M."/>
            <person name="Matsuno A."/>
            <person name="Muraki A."/>
            <person name="Nakayama S."/>
            <person name="Nakazaki N."/>
            <person name="Shinpo S."/>
            <person name="Takeuchi C."/>
            <person name="Wada T."/>
            <person name="Watanabe A."/>
            <person name="Yamada M."/>
            <person name="Yasuda M."/>
            <person name="Tabata S."/>
        </authorList>
    </citation>
    <scope>NUCLEOTIDE SEQUENCE [LARGE SCALE GENOMIC DNA]</scope>
    <source>
        <strain>cv. Columbia</strain>
    </source>
</reference>
<reference key="2">
    <citation type="journal article" date="2017" name="Plant J.">
        <title>Araport11: a complete reannotation of the Arabidopsis thaliana reference genome.</title>
        <authorList>
            <person name="Cheng C.Y."/>
            <person name="Krishnakumar V."/>
            <person name="Chan A.P."/>
            <person name="Thibaud-Nissen F."/>
            <person name="Schobel S."/>
            <person name="Town C.D."/>
        </authorList>
    </citation>
    <scope>GENOME REANNOTATION</scope>
    <source>
        <strain>cv. Columbia</strain>
    </source>
</reference>
<reference key="3">
    <citation type="journal article" date="2002" name="Trends Plant Sci.">
        <title>bZIP transcription factors in Arabidopsis.</title>
        <authorList>
            <person name="Jakoby M."/>
            <person name="Weisshaar B."/>
            <person name="Droege-Laser W."/>
            <person name="Vicente-Carbajosa J."/>
            <person name="Tiedemann J."/>
            <person name="Kroj T."/>
            <person name="Parcy F."/>
        </authorList>
    </citation>
    <scope>GENE FAMILY</scope>
    <scope>NOMENCLATURE</scope>
</reference>
<reference key="4">
    <citation type="journal article" date="2007" name="Plant J.">
        <title>Salt stress responses in Arabidopsis utilize a signal transduction pathway related to endoplasmic reticulum stress signaling.</title>
        <authorList>
            <person name="Liu J.X."/>
            <person name="Srivastava R."/>
            <person name="Che P."/>
            <person name="Howell S.H."/>
        </authorList>
    </citation>
    <scope>CLEAVAGE BY SBT6.1</scope>
</reference>
<reference key="5">
    <citation type="journal article" date="2010" name="Plant Cell">
        <title>bZIP28 and NF-Y transcription factors are activated by ER stress and assemble into a transcriptional complex to regulate stress response genes in Arabidopsis.</title>
        <authorList>
            <person name="Liu J.X."/>
            <person name="Howell S.H."/>
        </authorList>
    </citation>
    <scope>INTERACTION WITH BZIP28</scope>
</reference>
<keyword id="KW-0010">Activator</keyword>
<keyword id="KW-0238">DNA-binding</keyword>
<keyword id="KW-0256">Endoplasmic reticulum</keyword>
<keyword id="KW-0325">Glycoprotein</keyword>
<keyword id="KW-0472">Membrane</keyword>
<keyword id="KW-0539">Nucleus</keyword>
<keyword id="KW-1185">Reference proteome</keyword>
<keyword id="KW-0346">Stress response</keyword>
<keyword id="KW-0804">Transcription</keyword>
<keyword id="KW-0805">Transcription regulation</keyword>
<keyword id="KW-0812">Transmembrane</keyword>
<keyword id="KW-1133">Transmembrane helix</keyword>
<feature type="chain" id="PRO_0000431973" description="bZIP transcription factor 49">
    <location>
        <begin position="1"/>
        <end position="620"/>
    </location>
</feature>
<feature type="topological domain" description="Cytoplasmic" evidence="2">
    <location>
        <begin position="1"/>
        <end position="287"/>
    </location>
</feature>
<feature type="transmembrane region" description="Helical" evidence="3">
    <location>
        <begin position="288"/>
        <end position="308"/>
    </location>
</feature>
<feature type="topological domain" description="Lumenal" evidence="2">
    <location>
        <begin position="309"/>
        <end position="620"/>
    </location>
</feature>
<feature type="domain" description="bZIP" evidence="5">
    <location>
        <begin position="172"/>
        <end position="235"/>
    </location>
</feature>
<feature type="region of interest" description="Disordered" evidence="6">
    <location>
        <begin position="109"/>
        <end position="155"/>
    </location>
</feature>
<feature type="region of interest" description="Basic motif" evidence="5">
    <location>
        <begin position="173"/>
        <end position="205"/>
    </location>
</feature>
<feature type="region of interest" description="Leucine-zipper" evidence="5">
    <location>
        <begin position="211"/>
        <end position="218"/>
    </location>
</feature>
<feature type="region of interest" description="Disordered" evidence="6">
    <location>
        <begin position="343"/>
        <end position="364"/>
    </location>
</feature>
<feature type="region of interest" description="Disordered" evidence="6">
    <location>
        <begin position="398"/>
        <end position="460"/>
    </location>
</feature>
<feature type="region of interest" description="Disordered" evidence="6">
    <location>
        <begin position="505"/>
        <end position="557"/>
    </location>
</feature>
<feature type="short sequence motif" description="RRIL cleavage motif" evidence="10">
    <location>
        <begin position="526"/>
        <end position="529"/>
    </location>
</feature>
<feature type="compositionally biased region" description="Polar residues" evidence="6">
    <location>
        <begin position="109"/>
        <end position="135"/>
    </location>
</feature>
<feature type="compositionally biased region" description="Polar residues" evidence="6">
    <location>
        <begin position="352"/>
        <end position="364"/>
    </location>
</feature>
<feature type="compositionally biased region" description="Basic and acidic residues" evidence="6">
    <location>
        <begin position="398"/>
        <end position="409"/>
    </location>
</feature>
<feature type="compositionally biased region" description="Basic and acidic residues" evidence="6">
    <location>
        <begin position="432"/>
        <end position="441"/>
    </location>
</feature>
<feature type="compositionally biased region" description="Polar residues" evidence="6">
    <location>
        <begin position="447"/>
        <end position="460"/>
    </location>
</feature>
<feature type="compositionally biased region" description="Polar residues" evidence="6">
    <location>
        <begin position="508"/>
        <end position="519"/>
    </location>
</feature>
<feature type="compositionally biased region" description="Basic and acidic residues" evidence="6">
    <location>
        <begin position="540"/>
        <end position="557"/>
    </location>
</feature>
<feature type="glycosylation site" description="N-linked (GlcNAc...) asparagine" evidence="4">
    <location>
        <position position="351"/>
    </location>
</feature>
<feature type="glycosylation site" description="N-linked (GlcNAc...) asparagine" evidence="4">
    <location>
        <position position="363"/>
    </location>
</feature>
<feature type="glycosylation site" description="N-linked (GlcNAc...) asparagine" evidence="4">
    <location>
        <position position="515"/>
    </location>
</feature>
<feature type="glycosylation site" description="N-linked (GlcNAc...) asparagine" evidence="4">
    <location>
        <position position="539"/>
    </location>
</feature>
<feature type="glycosylation site" description="N-linked (GlcNAc...) asparagine" evidence="4">
    <location>
        <position position="546"/>
    </location>
</feature>
<name>BZP49_ARATH</name>
<dbReference type="EMBL" id="AL163972">
    <property type="protein sequence ID" value="CAB88069.1"/>
    <property type="molecule type" value="Genomic_DNA"/>
</dbReference>
<dbReference type="EMBL" id="CP002686">
    <property type="protein sequence ID" value="AEE79549.1"/>
    <property type="molecule type" value="Genomic_DNA"/>
</dbReference>
<dbReference type="PIR" id="T49067">
    <property type="entry name" value="T49067"/>
</dbReference>
<dbReference type="RefSeq" id="NP_191225.1">
    <property type="nucleotide sequence ID" value="NM_115525.2"/>
</dbReference>
<dbReference type="SMR" id="Q9LXX4"/>
<dbReference type="FunCoup" id="Q9LXX4">
    <property type="interactions" value="60"/>
</dbReference>
<dbReference type="STRING" id="3702.Q9LXX4"/>
<dbReference type="GlyCosmos" id="Q9LXX4">
    <property type="glycosylation" value="5 sites, No reported glycans"/>
</dbReference>
<dbReference type="GlyGen" id="Q9LXX4">
    <property type="glycosylation" value="5 sites"/>
</dbReference>
<dbReference type="PaxDb" id="3702-AT3G56660.1"/>
<dbReference type="EnsemblPlants" id="AT3G56660.1">
    <property type="protein sequence ID" value="AT3G56660.1"/>
    <property type="gene ID" value="AT3G56660"/>
</dbReference>
<dbReference type="GeneID" id="824833"/>
<dbReference type="Gramene" id="AT3G56660.1">
    <property type="protein sequence ID" value="AT3G56660.1"/>
    <property type="gene ID" value="AT3G56660"/>
</dbReference>
<dbReference type="KEGG" id="ath:AT3G56660"/>
<dbReference type="Araport" id="AT3G56660"/>
<dbReference type="TAIR" id="AT3G56660">
    <property type="gene designation" value="BZIP49"/>
</dbReference>
<dbReference type="eggNOG" id="ENOG502QQUV">
    <property type="taxonomic scope" value="Eukaryota"/>
</dbReference>
<dbReference type="HOGENOM" id="CLU_018118_2_0_1"/>
<dbReference type="InParanoid" id="Q9LXX4"/>
<dbReference type="OMA" id="KISYMVA"/>
<dbReference type="PhylomeDB" id="Q9LXX4"/>
<dbReference type="PRO" id="PR:Q9LXX4"/>
<dbReference type="Proteomes" id="UP000006548">
    <property type="component" value="Chromosome 3"/>
</dbReference>
<dbReference type="ExpressionAtlas" id="Q9LXX4">
    <property type="expression patterns" value="baseline and differential"/>
</dbReference>
<dbReference type="GO" id="GO:0005789">
    <property type="term" value="C:endoplasmic reticulum membrane"/>
    <property type="evidence" value="ECO:0007669"/>
    <property type="project" value="UniProtKB-SubCell"/>
</dbReference>
<dbReference type="GO" id="GO:0005634">
    <property type="term" value="C:nucleus"/>
    <property type="evidence" value="ECO:0007669"/>
    <property type="project" value="UniProtKB-SubCell"/>
</dbReference>
<dbReference type="GO" id="GO:0003677">
    <property type="term" value="F:DNA binding"/>
    <property type="evidence" value="ECO:0007669"/>
    <property type="project" value="UniProtKB-KW"/>
</dbReference>
<dbReference type="GO" id="GO:0003700">
    <property type="term" value="F:DNA-binding transcription factor activity"/>
    <property type="evidence" value="ECO:0000250"/>
    <property type="project" value="TAIR"/>
</dbReference>
<dbReference type="CDD" id="cd14704">
    <property type="entry name" value="bZIP_HY5-like"/>
    <property type="match status" value="1"/>
</dbReference>
<dbReference type="FunFam" id="1.20.5.170:FF:000085">
    <property type="entry name" value="bZIP transcription factor 49"/>
    <property type="match status" value="1"/>
</dbReference>
<dbReference type="Gene3D" id="1.20.5.170">
    <property type="match status" value="1"/>
</dbReference>
<dbReference type="InterPro" id="IPR004827">
    <property type="entry name" value="bZIP"/>
</dbReference>
<dbReference type="InterPro" id="IPR046347">
    <property type="entry name" value="bZIP_sf"/>
</dbReference>
<dbReference type="PANTHER" id="PTHR47416">
    <property type="entry name" value="BASIC-LEUCINE ZIPPER TRANSCRIPTION FACTOR F-RELATED"/>
    <property type="match status" value="1"/>
</dbReference>
<dbReference type="PANTHER" id="PTHR47416:SF3">
    <property type="entry name" value="BZIP TRANSCRIPTION FACTOR 17-RELATED"/>
    <property type="match status" value="1"/>
</dbReference>
<dbReference type="Pfam" id="PF00170">
    <property type="entry name" value="bZIP_1"/>
    <property type="match status" value="1"/>
</dbReference>
<dbReference type="SMART" id="SM00338">
    <property type="entry name" value="BRLZ"/>
    <property type="match status" value="1"/>
</dbReference>
<dbReference type="SUPFAM" id="SSF57959">
    <property type="entry name" value="Leucine zipper domain"/>
    <property type="match status" value="1"/>
</dbReference>
<dbReference type="PROSITE" id="PS50217">
    <property type="entry name" value="BZIP"/>
    <property type="match status" value="1"/>
</dbReference>
<organism>
    <name type="scientific">Arabidopsis thaliana</name>
    <name type="common">Mouse-ear cress</name>
    <dbReference type="NCBI Taxonomy" id="3702"/>
    <lineage>
        <taxon>Eukaryota</taxon>
        <taxon>Viridiplantae</taxon>
        <taxon>Streptophyta</taxon>
        <taxon>Embryophyta</taxon>
        <taxon>Tracheophyta</taxon>
        <taxon>Spermatophyta</taxon>
        <taxon>Magnoliopsida</taxon>
        <taxon>eudicotyledons</taxon>
        <taxon>Gunneridae</taxon>
        <taxon>Pentapetalae</taxon>
        <taxon>rosids</taxon>
        <taxon>malvids</taxon>
        <taxon>Brassicales</taxon>
        <taxon>Brassicaceae</taxon>
        <taxon>Camelineae</taxon>
        <taxon>Arabidopsis</taxon>
    </lineage>
</organism>
<accession>Q9LXX4</accession>